<accession>A4T1P7</accession>
<protein>
    <recommendedName>
        <fullName evidence="1">Large ribosomal subunit protein bL12</fullName>
    </recommendedName>
    <alternativeName>
        <fullName evidence="2">50S ribosomal protein L7/L12</fullName>
    </alternativeName>
</protein>
<organism>
    <name type="scientific">Mycolicibacterium gilvum (strain PYR-GCK)</name>
    <name type="common">Mycobacterium gilvum (strain PYR-GCK)</name>
    <dbReference type="NCBI Taxonomy" id="350054"/>
    <lineage>
        <taxon>Bacteria</taxon>
        <taxon>Bacillati</taxon>
        <taxon>Actinomycetota</taxon>
        <taxon>Actinomycetes</taxon>
        <taxon>Mycobacteriales</taxon>
        <taxon>Mycobacteriaceae</taxon>
        <taxon>Mycolicibacterium</taxon>
    </lineage>
</organism>
<comment type="function">
    <text evidence="1">Forms part of the ribosomal stalk which helps the ribosome interact with GTP-bound translation factors. Is thus essential for accurate translation.</text>
</comment>
<comment type="subunit">
    <text evidence="1">Homodimer. Part of the ribosomal stalk of the 50S ribosomal subunit. Forms a multimeric L10(L12)X complex, where L10 forms an elongated spine to which 2 to 4 L12 dimers bind in a sequential fashion. Binds GTP-bound translation factors.</text>
</comment>
<comment type="similarity">
    <text evidence="1">Belongs to the bacterial ribosomal protein bL12 family.</text>
</comment>
<dbReference type="EMBL" id="CP000656">
    <property type="protein sequence ID" value="ABP47566.1"/>
    <property type="molecule type" value="Genomic_DNA"/>
</dbReference>
<dbReference type="SMR" id="A4T1P7"/>
<dbReference type="STRING" id="350054.Mflv_5100"/>
<dbReference type="KEGG" id="mgi:Mflv_5100"/>
<dbReference type="eggNOG" id="COG0222">
    <property type="taxonomic scope" value="Bacteria"/>
</dbReference>
<dbReference type="HOGENOM" id="CLU_086499_3_0_11"/>
<dbReference type="OrthoDB" id="9811748at2"/>
<dbReference type="GO" id="GO:0022625">
    <property type="term" value="C:cytosolic large ribosomal subunit"/>
    <property type="evidence" value="ECO:0007669"/>
    <property type="project" value="TreeGrafter"/>
</dbReference>
<dbReference type="GO" id="GO:0003729">
    <property type="term" value="F:mRNA binding"/>
    <property type="evidence" value="ECO:0007669"/>
    <property type="project" value="TreeGrafter"/>
</dbReference>
<dbReference type="GO" id="GO:0003735">
    <property type="term" value="F:structural constituent of ribosome"/>
    <property type="evidence" value="ECO:0007669"/>
    <property type="project" value="InterPro"/>
</dbReference>
<dbReference type="GO" id="GO:0006412">
    <property type="term" value="P:translation"/>
    <property type="evidence" value="ECO:0007669"/>
    <property type="project" value="UniProtKB-UniRule"/>
</dbReference>
<dbReference type="CDD" id="cd00387">
    <property type="entry name" value="Ribosomal_L7_L12"/>
    <property type="match status" value="1"/>
</dbReference>
<dbReference type="FunFam" id="1.20.5.710:FF:000005">
    <property type="entry name" value="50S ribosomal protein L7/L12"/>
    <property type="match status" value="1"/>
</dbReference>
<dbReference type="FunFam" id="3.30.1390.10:FF:000001">
    <property type="entry name" value="50S ribosomal protein L7/L12"/>
    <property type="match status" value="1"/>
</dbReference>
<dbReference type="Gene3D" id="3.30.1390.10">
    <property type="match status" value="1"/>
</dbReference>
<dbReference type="Gene3D" id="1.20.5.710">
    <property type="entry name" value="Single helix bin"/>
    <property type="match status" value="1"/>
</dbReference>
<dbReference type="HAMAP" id="MF_00368">
    <property type="entry name" value="Ribosomal_bL12"/>
    <property type="match status" value="1"/>
</dbReference>
<dbReference type="InterPro" id="IPR000206">
    <property type="entry name" value="Ribosomal_bL12"/>
</dbReference>
<dbReference type="InterPro" id="IPR013823">
    <property type="entry name" value="Ribosomal_bL12_C"/>
</dbReference>
<dbReference type="InterPro" id="IPR014719">
    <property type="entry name" value="Ribosomal_bL12_C/ClpS-like"/>
</dbReference>
<dbReference type="InterPro" id="IPR008932">
    <property type="entry name" value="Ribosomal_bL12_oligo"/>
</dbReference>
<dbReference type="InterPro" id="IPR036235">
    <property type="entry name" value="Ribosomal_bL12_oligo_N_sf"/>
</dbReference>
<dbReference type="NCBIfam" id="TIGR00855">
    <property type="entry name" value="L12"/>
    <property type="match status" value="1"/>
</dbReference>
<dbReference type="PANTHER" id="PTHR45987">
    <property type="entry name" value="39S RIBOSOMAL PROTEIN L12"/>
    <property type="match status" value="1"/>
</dbReference>
<dbReference type="PANTHER" id="PTHR45987:SF4">
    <property type="entry name" value="LARGE RIBOSOMAL SUBUNIT PROTEIN BL12M"/>
    <property type="match status" value="1"/>
</dbReference>
<dbReference type="Pfam" id="PF00542">
    <property type="entry name" value="Ribosomal_L12"/>
    <property type="match status" value="1"/>
</dbReference>
<dbReference type="Pfam" id="PF16320">
    <property type="entry name" value="Ribosomal_L12_N"/>
    <property type="match status" value="1"/>
</dbReference>
<dbReference type="SUPFAM" id="SSF54736">
    <property type="entry name" value="ClpS-like"/>
    <property type="match status" value="1"/>
</dbReference>
<dbReference type="SUPFAM" id="SSF48300">
    <property type="entry name" value="Ribosomal protein L7/12, oligomerisation (N-terminal) domain"/>
    <property type="match status" value="1"/>
</dbReference>
<sequence>MAKLSTDELLDAFKEMTLLELSEFVKQFEETFDVTAAAPVAVAAAGPAAGGGAAEAAEEQSEFDVILEGAGEKKIGVIKVVREIVSGLGLKEAKDLVDSAPKPLLEKVNKEAAEDAKAKLEAAGASVTVK</sequence>
<reference key="1">
    <citation type="submission" date="2007-04" db="EMBL/GenBank/DDBJ databases">
        <title>Complete sequence of chromosome of Mycobacterium gilvum PYR-GCK.</title>
        <authorList>
            <consortium name="US DOE Joint Genome Institute"/>
            <person name="Copeland A."/>
            <person name="Lucas S."/>
            <person name="Lapidus A."/>
            <person name="Barry K."/>
            <person name="Detter J.C."/>
            <person name="Glavina del Rio T."/>
            <person name="Hammon N."/>
            <person name="Israni S."/>
            <person name="Dalin E."/>
            <person name="Tice H."/>
            <person name="Pitluck S."/>
            <person name="Chain P."/>
            <person name="Malfatti S."/>
            <person name="Shin M."/>
            <person name="Vergez L."/>
            <person name="Schmutz J."/>
            <person name="Larimer F."/>
            <person name="Land M."/>
            <person name="Hauser L."/>
            <person name="Kyrpides N."/>
            <person name="Mikhailova N."/>
            <person name="Miller C."/>
            <person name="Richardson P."/>
        </authorList>
    </citation>
    <scope>NUCLEOTIDE SEQUENCE [LARGE SCALE GENOMIC DNA]</scope>
    <source>
        <strain>PYR-GCK</strain>
    </source>
</reference>
<feature type="chain" id="PRO_1000079801" description="Large ribosomal subunit protein bL12">
    <location>
        <begin position="1"/>
        <end position="130"/>
    </location>
</feature>
<gene>
    <name evidence="1" type="primary">rplL</name>
    <name type="ordered locus">Mflv_5100</name>
</gene>
<proteinExistence type="inferred from homology"/>
<evidence type="ECO:0000255" key="1">
    <source>
        <dbReference type="HAMAP-Rule" id="MF_00368"/>
    </source>
</evidence>
<evidence type="ECO:0000305" key="2"/>
<name>RL7_MYCGI</name>
<keyword id="KW-0687">Ribonucleoprotein</keyword>
<keyword id="KW-0689">Ribosomal protein</keyword>